<gene>
    <name type="primary">ulaB</name>
    <name type="ordered locus">STM4384</name>
</gene>
<protein>
    <recommendedName>
        <fullName evidence="2">Ascorbate-specific PTS system EIIB component</fullName>
        <ecNumber evidence="2">2.7.1.194</ecNumber>
    </recommendedName>
    <alternativeName>
        <fullName evidence="2">Ascorbate-specific phosphotransferase enzyme IIB component</fullName>
    </alternativeName>
</protein>
<comment type="function">
    <text evidence="2">The phosphoenolpyruvate-dependent sugar phosphotransferase system (sugar PTS), a major carbohydrate active transport system, catalyzes the phosphorylation of incoming sugar substrates concomitantly with their translocation across the cell membrane. The enzyme II UlaABC PTS system is involved in ascorbate transport.</text>
</comment>
<comment type="catalytic activity">
    <reaction evidence="2">
        <text>N(pros)-phospho-L-histidyl-[protein] + L-ascorbate(out) = L-ascorbate 6-phosphate(in) + L-histidyl-[protein]</text>
        <dbReference type="Rhea" id="RHEA:42436"/>
        <dbReference type="Rhea" id="RHEA-COMP:9745"/>
        <dbReference type="Rhea" id="RHEA-COMP:9746"/>
        <dbReference type="ChEBI" id="CHEBI:29979"/>
        <dbReference type="ChEBI" id="CHEBI:38290"/>
        <dbReference type="ChEBI" id="CHEBI:61698"/>
        <dbReference type="ChEBI" id="CHEBI:64837"/>
        <dbReference type="EC" id="2.7.1.194"/>
    </reaction>
</comment>
<comment type="subcellular location">
    <subcellularLocation>
        <location evidence="4">Cytoplasm</location>
    </subcellularLocation>
</comment>
<comment type="induction">
    <text evidence="2">Induced by L-ascorbate. Repressed by UlaR.</text>
</comment>
<comment type="domain">
    <text evidence="3">The PTS EIIB type-2 domain is phosphorylated by phospho-EIIA on a cysteinyl residue. Then, it transfers the phosphoryl group to the sugar substrate concomitantly with the sugar uptake processed by the PTS EIIC type-2 domain.</text>
</comment>
<evidence type="ECO:0000250" key="1">
    <source>
        <dbReference type="UniProtKB" id="P00550"/>
    </source>
</evidence>
<evidence type="ECO:0000250" key="2">
    <source>
        <dbReference type="UniProtKB" id="P69822"/>
    </source>
</evidence>
<evidence type="ECO:0000255" key="3">
    <source>
        <dbReference type="PROSITE-ProRule" id="PRU00422"/>
    </source>
</evidence>
<evidence type="ECO:0000305" key="4"/>
<keyword id="KW-0963">Cytoplasm</keyword>
<keyword id="KW-0418">Kinase</keyword>
<keyword id="KW-0597">Phosphoprotein</keyword>
<keyword id="KW-0598">Phosphotransferase system</keyword>
<keyword id="KW-1185">Reference proteome</keyword>
<keyword id="KW-0808">Transferase</keyword>
<keyword id="KW-0813">Transport</keyword>
<proteinExistence type="inferred from homology"/>
<name>ULAB_SALTY</name>
<accession>Q8ZK89</accession>
<reference key="1">
    <citation type="journal article" date="2001" name="Nature">
        <title>Complete genome sequence of Salmonella enterica serovar Typhimurium LT2.</title>
        <authorList>
            <person name="McClelland M."/>
            <person name="Sanderson K.E."/>
            <person name="Spieth J."/>
            <person name="Clifton S.W."/>
            <person name="Latreille P."/>
            <person name="Courtney L."/>
            <person name="Porwollik S."/>
            <person name="Ali J."/>
            <person name="Dante M."/>
            <person name="Du F."/>
            <person name="Hou S."/>
            <person name="Layman D."/>
            <person name="Leonard S."/>
            <person name="Nguyen C."/>
            <person name="Scott K."/>
            <person name="Holmes A."/>
            <person name="Grewal N."/>
            <person name="Mulvaney E."/>
            <person name="Ryan E."/>
            <person name="Sun H."/>
            <person name="Florea L."/>
            <person name="Miller W."/>
            <person name="Stoneking T."/>
            <person name="Nhan M."/>
            <person name="Waterston R."/>
            <person name="Wilson R.K."/>
        </authorList>
    </citation>
    <scope>NUCLEOTIDE SEQUENCE [LARGE SCALE GENOMIC DNA]</scope>
    <source>
        <strain>LT2 / SGSC1412 / ATCC 700720</strain>
    </source>
</reference>
<organism>
    <name type="scientific">Salmonella typhimurium (strain LT2 / SGSC1412 / ATCC 700720)</name>
    <dbReference type="NCBI Taxonomy" id="99287"/>
    <lineage>
        <taxon>Bacteria</taxon>
        <taxon>Pseudomonadati</taxon>
        <taxon>Pseudomonadota</taxon>
        <taxon>Gammaproteobacteria</taxon>
        <taxon>Enterobacterales</taxon>
        <taxon>Enterobacteriaceae</taxon>
        <taxon>Salmonella</taxon>
    </lineage>
</organism>
<sequence length="101" mass="10882">MTVRILAVCGNGQGSSMIMKMKVDQFLTQSNIDHTVNSCAVGEYKSELSGADIIIASTHIAGEISVTGNKYVVGVRNMLSPADFGPKLLEVIKEHFPQDVK</sequence>
<feature type="chain" id="PRO_0000230326" description="Ascorbate-specific PTS system EIIB component">
    <location>
        <begin position="1"/>
        <end position="101"/>
    </location>
</feature>
<feature type="domain" description="PTS EIIB type-2" evidence="3">
    <location>
        <begin position="3"/>
        <end position="96"/>
    </location>
</feature>
<feature type="active site" description="Phosphocysteine intermediate" evidence="1 4">
    <location>
        <position position="9"/>
    </location>
</feature>
<feature type="modified residue" description="Phosphocysteine" evidence="1 4">
    <location>
        <position position="9"/>
    </location>
</feature>
<dbReference type="EC" id="2.7.1.194" evidence="2"/>
<dbReference type="EMBL" id="AE006468">
    <property type="protein sequence ID" value="AAL23204.1"/>
    <property type="molecule type" value="Genomic_DNA"/>
</dbReference>
<dbReference type="RefSeq" id="WP_000218358.1">
    <property type="nucleotide sequence ID" value="NC_003197.2"/>
</dbReference>
<dbReference type="SMR" id="Q8ZK89"/>
<dbReference type="STRING" id="99287.STM4384"/>
<dbReference type="PaxDb" id="99287-STM4384"/>
<dbReference type="KEGG" id="stm:STM4384"/>
<dbReference type="PATRIC" id="fig|99287.12.peg.4609"/>
<dbReference type="HOGENOM" id="CLU_159248_0_0_6"/>
<dbReference type="OMA" id="YDLIFCP"/>
<dbReference type="PhylomeDB" id="Q8ZK89"/>
<dbReference type="BioCyc" id="SENT99287:STM4384-MONOMER"/>
<dbReference type="Proteomes" id="UP000001014">
    <property type="component" value="Chromosome"/>
</dbReference>
<dbReference type="GO" id="GO:0005737">
    <property type="term" value="C:cytoplasm"/>
    <property type="evidence" value="ECO:0007669"/>
    <property type="project" value="UniProtKB-SubCell"/>
</dbReference>
<dbReference type="GO" id="GO:0016301">
    <property type="term" value="F:kinase activity"/>
    <property type="evidence" value="ECO:0007669"/>
    <property type="project" value="UniProtKB-KW"/>
</dbReference>
<dbReference type="GO" id="GO:0008982">
    <property type="term" value="F:protein-N(PI)-phosphohistidine-sugar phosphotransferase activity"/>
    <property type="evidence" value="ECO:0007669"/>
    <property type="project" value="InterPro"/>
</dbReference>
<dbReference type="GO" id="GO:0009401">
    <property type="term" value="P:phosphoenolpyruvate-dependent sugar phosphotransferase system"/>
    <property type="evidence" value="ECO:0007669"/>
    <property type="project" value="UniProtKB-KW"/>
</dbReference>
<dbReference type="CDD" id="cd05563">
    <property type="entry name" value="PTS_IIB_ascorbate"/>
    <property type="match status" value="1"/>
</dbReference>
<dbReference type="FunFam" id="3.40.50.2300:FF:000030">
    <property type="entry name" value="PTS system, ascorbate-specific, IIB component"/>
    <property type="match status" value="1"/>
</dbReference>
<dbReference type="Gene3D" id="3.40.50.2300">
    <property type="match status" value="1"/>
</dbReference>
<dbReference type="InterPro" id="IPR036095">
    <property type="entry name" value="PTS_EIIB-like_sf"/>
</dbReference>
<dbReference type="InterPro" id="IPR013011">
    <property type="entry name" value="PTS_EIIB_2"/>
</dbReference>
<dbReference type="InterPro" id="IPR003501">
    <property type="entry name" value="PTS_EIIB_2/3"/>
</dbReference>
<dbReference type="NCBIfam" id="NF007586">
    <property type="entry name" value="PRK10222.1"/>
    <property type="match status" value="1"/>
</dbReference>
<dbReference type="Pfam" id="PF02302">
    <property type="entry name" value="PTS_IIB"/>
    <property type="match status" value="1"/>
</dbReference>
<dbReference type="SUPFAM" id="SSF52794">
    <property type="entry name" value="PTS system IIB component-like"/>
    <property type="match status" value="1"/>
</dbReference>
<dbReference type="PROSITE" id="PS51099">
    <property type="entry name" value="PTS_EIIB_TYPE_2"/>
    <property type="match status" value="1"/>
</dbReference>